<name>ABA4_PYRO7</name>
<keyword id="KW-0521">NADP</keyword>
<keyword id="KW-0560">Oxidoreductase</keyword>
<keyword id="KW-1185">Reference proteome</keyword>
<keyword id="KW-0843">Virulence</keyword>
<evidence type="ECO:0000250" key="1">
    <source>
        <dbReference type="UniProtKB" id="L0E2Z4"/>
    </source>
</evidence>
<evidence type="ECO:0000250" key="2">
    <source>
        <dbReference type="UniProtKB" id="O93868"/>
    </source>
</evidence>
<evidence type="ECO:0000250" key="3">
    <source>
        <dbReference type="UniProtKB" id="Q14RS1"/>
    </source>
</evidence>
<evidence type="ECO:0000269" key="4">
    <source>
    </source>
</evidence>
<evidence type="ECO:0000303" key="5">
    <source>
    </source>
</evidence>
<evidence type="ECO:0000305" key="6"/>
<evidence type="ECO:0000305" key="7">
    <source>
    </source>
</evidence>
<organism>
    <name type="scientific">Pyricularia oryzae (strain 70-15 / ATCC MYA-4617 / FGSC 8958)</name>
    <name type="common">Rice blast fungus</name>
    <name type="synonym">Magnaporthe oryzae</name>
    <dbReference type="NCBI Taxonomy" id="242507"/>
    <lineage>
        <taxon>Eukaryota</taxon>
        <taxon>Fungi</taxon>
        <taxon>Dikarya</taxon>
        <taxon>Ascomycota</taxon>
        <taxon>Pezizomycotina</taxon>
        <taxon>Sordariomycetes</taxon>
        <taxon>Sordariomycetidae</taxon>
        <taxon>Magnaporthales</taxon>
        <taxon>Pyriculariaceae</taxon>
        <taxon>Pyricularia</taxon>
    </lineage>
</organism>
<comment type="function">
    <text evidence="3 4">Short-chain dehydrogenase/reductase involved in the biosynthesis of abscisic acid (ABA), a phytohormone that acts antagonistically toward salicylic acid (SA), jasmonic acid (JA) and ethylene (ETH) signaling, to impede plant defense responses (PubMed:26648962). During pathogen-host interaction, ABA plays a dual role in disease severity by increasing plant susceptibility and accelerating pathogenesis in the fungus itself (PubMed:26648962). The first step of the pathway catalyzes the reaction from farnesyl diphosphate to alpha-ionylideneethane performed by the alpha-ionylideneethane synthase ABA3 via a three-step reaction mechanism involving 2 neutral intermediates, beta-farnesene and allofarnesene (By similarity). The cytochrome P450 monooxygenase ABA1 might then be involved in the conversion of alpha-ionylideneethane to alpha-ionylideneacetic acid (By similarity). Alpha-ionylideneacetic acid is further converted to abscisic acid in 2 steps involving the cytochrome P450 monooxygenase ABA2 and the short-chain dehydrogenase/reductase ABA4, via the intermediates 1'-deoxy-ABA or 1',4'-trans-diol-ABA, depending on the order of action of these 2 enzymes (By similarity). ABA2 is responsible for the hydroxylation of carbon atom C-1' and ABA4 might be involved in the oxidation of the C-4' carbon atom (By similarity).</text>
</comment>
<comment type="pathway">
    <text evidence="4">Hormone biosynthesis.</text>
</comment>
<comment type="induction">
    <text evidence="4">Expression is up-regulated in spores.</text>
</comment>
<comment type="disruption phenotype">
    <text evidence="4">Leads to slower vegetative growth and dark pigmentation of the mycelia (PubMed:26648962). Also leads to the secretion of a very dark pigment (PubMed:26648962). Affects sporulation and appressoria formation (PubMed:26648962). Shows hyper-branching of the germ tubes, as well as unusual bulges along the hyphae with less melainized appressoria (PubMed:26648962). Significantly reduces the production of abscisic acid (ABA) (PubMed:26648962). Highly reduces virulence (PubMed:26648962).</text>
</comment>
<comment type="similarity">
    <text evidence="6">Belongs to the short-chain dehydrogenases/reductases (SDR) family.</text>
</comment>
<feature type="chain" id="PRO_0000448423" description="Short-chain dehydrogenase/reductase ABA4">
    <location>
        <begin position="1"/>
        <end position="269"/>
    </location>
</feature>
<feature type="active site" description="Proton donor" evidence="2">
    <location>
        <position position="174"/>
    </location>
</feature>
<feature type="active site" description="Lowers pKa of active site Tyr" evidence="2">
    <location>
        <position position="178"/>
    </location>
</feature>
<feature type="binding site" evidence="1">
    <location>
        <position position="34"/>
    </location>
    <ligand>
        <name>NADP(+)</name>
        <dbReference type="ChEBI" id="CHEBI:58349"/>
    </ligand>
</feature>
<feature type="binding site" evidence="1">
    <location>
        <position position="80"/>
    </location>
    <ligand>
        <name>NADP(+)</name>
        <dbReference type="ChEBI" id="CHEBI:58349"/>
    </ligand>
</feature>
<feature type="binding site" evidence="1">
    <location>
        <position position="144"/>
    </location>
    <ligand>
        <name>NADP(+)</name>
        <dbReference type="ChEBI" id="CHEBI:58349"/>
    </ligand>
</feature>
<feature type="binding site" evidence="2">
    <location>
        <position position="174"/>
    </location>
    <ligand>
        <name>NADP(+)</name>
        <dbReference type="ChEBI" id="CHEBI:58349"/>
    </ligand>
</feature>
<feature type="binding site" evidence="2">
    <location>
        <position position="178"/>
    </location>
    <ligand>
        <name>NADP(+)</name>
        <dbReference type="ChEBI" id="CHEBI:58349"/>
    </ligand>
</feature>
<feature type="binding site" evidence="2">
    <location>
        <position position="207"/>
    </location>
    <ligand>
        <name>NADP(+)</name>
        <dbReference type="ChEBI" id="CHEBI:58349"/>
    </ligand>
</feature>
<feature type="binding site" evidence="1">
    <location>
        <position position="209"/>
    </location>
    <ligand>
        <name>NADP(+)</name>
        <dbReference type="ChEBI" id="CHEBI:58349"/>
    </ligand>
</feature>
<dbReference type="EC" id="1.1.1.-" evidence="7"/>
<dbReference type="EMBL" id="CM001233">
    <property type="protein sequence ID" value="EHA51620.1"/>
    <property type="molecule type" value="Genomic_DNA"/>
</dbReference>
<dbReference type="RefSeq" id="XP_003711427.1">
    <property type="nucleotide sequence ID" value="XM_003711379.1"/>
</dbReference>
<dbReference type="SMR" id="G4N1P8"/>
<dbReference type="STRING" id="242507.G4N1P8"/>
<dbReference type="EnsemblFungi" id="MGG_07514T0">
    <property type="protein sequence ID" value="MGG_07514T0"/>
    <property type="gene ID" value="MGG_07514"/>
</dbReference>
<dbReference type="GeneID" id="2683434"/>
<dbReference type="KEGG" id="mgr:MGG_07514"/>
<dbReference type="VEuPathDB" id="FungiDB:MGG_07514"/>
<dbReference type="eggNOG" id="KOG0725">
    <property type="taxonomic scope" value="Eukaryota"/>
</dbReference>
<dbReference type="HOGENOM" id="CLU_010194_1_0_1"/>
<dbReference type="InParanoid" id="G4N1P8"/>
<dbReference type="OMA" id="NGACWDI"/>
<dbReference type="OrthoDB" id="1669814at2759"/>
<dbReference type="PHI-base" id="PHI:5440"/>
<dbReference type="Proteomes" id="UP000009058">
    <property type="component" value="Chromosome 3"/>
</dbReference>
<dbReference type="GO" id="GO:0016491">
    <property type="term" value="F:oxidoreductase activity"/>
    <property type="evidence" value="ECO:0007669"/>
    <property type="project" value="UniProtKB-KW"/>
</dbReference>
<dbReference type="GO" id="GO:0009688">
    <property type="term" value="P:abscisic acid biosynthetic process"/>
    <property type="evidence" value="ECO:0000315"/>
    <property type="project" value="GO_Central"/>
</dbReference>
<dbReference type="CDD" id="cd05233">
    <property type="entry name" value="SDR_c"/>
    <property type="match status" value="1"/>
</dbReference>
<dbReference type="FunFam" id="3.40.50.720:FF:000084">
    <property type="entry name" value="Short-chain dehydrogenase reductase"/>
    <property type="match status" value="1"/>
</dbReference>
<dbReference type="Gene3D" id="3.40.50.720">
    <property type="entry name" value="NAD(P)-binding Rossmann-like Domain"/>
    <property type="match status" value="1"/>
</dbReference>
<dbReference type="InterPro" id="IPR036291">
    <property type="entry name" value="NAD(P)-bd_dom_sf"/>
</dbReference>
<dbReference type="InterPro" id="IPR002347">
    <property type="entry name" value="SDR_fam"/>
</dbReference>
<dbReference type="PANTHER" id="PTHR24321">
    <property type="entry name" value="DEHYDROGENASES, SHORT CHAIN"/>
    <property type="match status" value="1"/>
</dbReference>
<dbReference type="PANTHER" id="PTHR24321:SF8">
    <property type="entry name" value="ESTRADIOL 17-BETA-DEHYDROGENASE 8-RELATED"/>
    <property type="match status" value="1"/>
</dbReference>
<dbReference type="Pfam" id="PF13561">
    <property type="entry name" value="adh_short_C2"/>
    <property type="match status" value="1"/>
</dbReference>
<dbReference type="PRINTS" id="PR00081">
    <property type="entry name" value="GDHRDH"/>
</dbReference>
<dbReference type="PRINTS" id="PR00080">
    <property type="entry name" value="SDRFAMILY"/>
</dbReference>
<dbReference type="SUPFAM" id="SSF51735">
    <property type="entry name" value="NAD(P)-binding Rossmann-fold domains"/>
    <property type="match status" value="1"/>
</dbReference>
<proteinExistence type="evidence at transcript level"/>
<protein>
    <recommendedName>
        <fullName evidence="5">Short-chain dehydrogenase/reductase ABA4</fullName>
        <ecNumber evidence="7">1.1.1.-</ecNumber>
    </recommendedName>
    <alternativeName>
        <fullName evidence="5">Abscisic acid biosynthesis protein 4</fullName>
    </alternativeName>
</protein>
<gene>
    <name evidence="5" type="primary">ABA4</name>
    <name type="ORF">MGG_07514</name>
</gene>
<reference key="1">
    <citation type="journal article" date="2005" name="Nature">
        <title>The genome sequence of the rice blast fungus Magnaporthe grisea.</title>
        <authorList>
            <person name="Dean R.A."/>
            <person name="Talbot N.J."/>
            <person name="Ebbole D.J."/>
            <person name="Farman M.L."/>
            <person name="Mitchell T.K."/>
            <person name="Orbach M.J."/>
            <person name="Thon M.R."/>
            <person name="Kulkarni R."/>
            <person name="Xu J.-R."/>
            <person name="Pan H."/>
            <person name="Read N.D."/>
            <person name="Lee Y.-H."/>
            <person name="Carbone I."/>
            <person name="Brown D."/>
            <person name="Oh Y.Y."/>
            <person name="Donofrio N."/>
            <person name="Jeong J.S."/>
            <person name="Soanes D.M."/>
            <person name="Djonovic S."/>
            <person name="Kolomiets E."/>
            <person name="Rehmeyer C."/>
            <person name="Li W."/>
            <person name="Harding M."/>
            <person name="Kim S."/>
            <person name="Lebrun M.-H."/>
            <person name="Bohnert H."/>
            <person name="Coughlan S."/>
            <person name="Butler J."/>
            <person name="Calvo S.E."/>
            <person name="Ma L.-J."/>
            <person name="Nicol R."/>
            <person name="Purcell S."/>
            <person name="Nusbaum C."/>
            <person name="Galagan J.E."/>
            <person name="Birren B.W."/>
        </authorList>
    </citation>
    <scope>NUCLEOTIDE SEQUENCE [LARGE SCALE GENOMIC DNA]</scope>
    <source>
        <strain>70-15 / ATCC MYA-4617 / FGSC 8958</strain>
    </source>
</reference>
<reference key="2">
    <citation type="journal article" date="2015" name="Front. Plant Sci.">
        <title>Crucial roles of abscisic acid biogenesis in virulence of rice blast fungus Magnaporthe oryzae.</title>
        <authorList>
            <person name="Spence C.A."/>
            <person name="Lakshmanan V."/>
            <person name="Donofrio N."/>
            <person name="Bais H.P."/>
        </authorList>
    </citation>
    <scope>IDENTIFICATION</scope>
    <scope>INDUCTION</scope>
    <scope>FUNCTION</scope>
    <scope>DISRUPTION PHENOTYPE</scope>
    <scope>PATHWAY</scope>
</reference>
<reference key="3">
    <citation type="journal article" date="2017" name="Front. Plant Sci.">
        <title>Abscisic acid as pathogen effector and immune regulator.</title>
        <authorList>
            <person name="Lievens L."/>
            <person name="Pollier J."/>
            <person name="Goossens A."/>
            <person name="Beyaert R."/>
            <person name="Staal J."/>
        </authorList>
    </citation>
    <scope>FUNCTION</scope>
</reference>
<accession>G4N1P8</accession>
<sequence>MGSIENPEIMASTMLHILPLAGKVYGITGGASGIGLATAQILSRRGATVCIADVDPKAMASAEVYFSGQSGAKYSITKVDISKRSEVNAWVDGIISQFGRLDGAANVAGVIGKIHGAVPVSEMDDDEWDKIVAVNLTGTMYCMRAQLRNIVDGGSIVNVASIHGLKGFANHAAYDASKHGVIGLTKAAAQENGAREIRVNAVAPGAIYTPLMQKNWDITGRPKDAPFDDPSAFRRQGTAMETGNVIAFLLGPDSTFVSGSVYSVDGAWI</sequence>